<keyword id="KW-0489">Methyltransferase</keyword>
<keyword id="KW-1185">Reference proteome</keyword>
<keyword id="KW-0949">S-adenosyl-L-methionine</keyword>
<keyword id="KW-0808">Transferase</keyword>
<keyword id="KW-0819">tRNA processing</keyword>
<comment type="function">
    <text evidence="1">Catalyzes the formation of N(7)-methylguanine at position 46 (m7G46) in tRNA.</text>
</comment>
<comment type="catalytic activity">
    <reaction evidence="1">
        <text>guanosine(46) in tRNA + S-adenosyl-L-methionine = N(7)-methylguanosine(46) in tRNA + S-adenosyl-L-homocysteine</text>
        <dbReference type="Rhea" id="RHEA:42708"/>
        <dbReference type="Rhea" id="RHEA-COMP:10188"/>
        <dbReference type="Rhea" id="RHEA-COMP:10189"/>
        <dbReference type="ChEBI" id="CHEBI:57856"/>
        <dbReference type="ChEBI" id="CHEBI:59789"/>
        <dbReference type="ChEBI" id="CHEBI:74269"/>
        <dbReference type="ChEBI" id="CHEBI:74480"/>
        <dbReference type="EC" id="2.1.1.33"/>
    </reaction>
</comment>
<comment type="pathway">
    <text evidence="1">tRNA modification; N(7)-methylguanine-tRNA biosynthesis.</text>
</comment>
<comment type="similarity">
    <text evidence="1">Belongs to the class I-like SAM-binding methyltransferase superfamily. TrmB family.</text>
</comment>
<organism>
    <name type="scientific">Coprothermobacter proteolyticus (strain ATCC 35245 / DSM 5265 / OCM 4 / BT)</name>
    <dbReference type="NCBI Taxonomy" id="309798"/>
    <lineage>
        <taxon>Bacteria</taxon>
        <taxon>Pseudomonadati</taxon>
        <taxon>Coprothermobacterota</taxon>
        <taxon>Coprothermobacteria</taxon>
        <taxon>Coprothermobacterales</taxon>
        <taxon>Coprothermobacteraceae</taxon>
        <taxon>Coprothermobacter</taxon>
    </lineage>
</organism>
<proteinExistence type="inferred from homology"/>
<name>TRMB_COPPD</name>
<feature type="chain" id="PRO_0000387946" description="tRNA (guanine-N(7)-)-methyltransferase">
    <location>
        <begin position="1"/>
        <end position="319"/>
    </location>
</feature>
<feature type="binding site" evidence="1">
    <location>
        <position position="28"/>
    </location>
    <ligand>
        <name>S-adenosyl-L-methionine</name>
        <dbReference type="ChEBI" id="CHEBI:59789"/>
    </ligand>
</feature>
<feature type="binding site" evidence="1">
    <location>
        <position position="51"/>
    </location>
    <ligand>
        <name>S-adenosyl-L-methionine</name>
        <dbReference type="ChEBI" id="CHEBI:59789"/>
    </ligand>
</feature>
<feature type="binding site" evidence="1">
    <location>
        <position position="75"/>
    </location>
    <ligand>
        <name>S-adenosyl-L-methionine</name>
        <dbReference type="ChEBI" id="CHEBI:59789"/>
    </ligand>
</feature>
<feature type="binding site" evidence="1">
    <location>
        <position position="134"/>
    </location>
    <ligand>
        <name>substrate</name>
    </ligand>
</feature>
<feature type="binding site" evidence="1">
    <location>
        <begin position="167"/>
        <end position="170"/>
    </location>
    <ligand>
        <name>substrate</name>
    </ligand>
</feature>
<dbReference type="EC" id="2.1.1.33" evidence="1"/>
<dbReference type="EMBL" id="CP001145">
    <property type="protein sequence ID" value="ACI18005.1"/>
    <property type="molecule type" value="Genomic_DNA"/>
</dbReference>
<dbReference type="RefSeq" id="WP_012544655.1">
    <property type="nucleotide sequence ID" value="NC_011295.1"/>
</dbReference>
<dbReference type="SMR" id="B5Y822"/>
<dbReference type="STRING" id="309798.COPRO5265_0563"/>
<dbReference type="KEGG" id="cpo:COPRO5265_0563"/>
<dbReference type="eggNOG" id="COG0220">
    <property type="taxonomic scope" value="Bacteria"/>
</dbReference>
<dbReference type="HOGENOM" id="CLU_077150_0_0_9"/>
<dbReference type="OrthoDB" id="9802090at2"/>
<dbReference type="UniPathway" id="UPA00989"/>
<dbReference type="Proteomes" id="UP000001732">
    <property type="component" value="Chromosome"/>
</dbReference>
<dbReference type="GO" id="GO:0043527">
    <property type="term" value="C:tRNA methyltransferase complex"/>
    <property type="evidence" value="ECO:0007669"/>
    <property type="project" value="TreeGrafter"/>
</dbReference>
<dbReference type="GO" id="GO:0008176">
    <property type="term" value="F:tRNA (guanine(46)-N7)-methyltransferase activity"/>
    <property type="evidence" value="ECO:0007669"/>
    <property type="project" value="UniProtKB-UniRule"/>
</dbReference>
<dbReference type="Gene3D" id="3.40.50.150">
    <property type="entry name" value="Vaccinia Virus protein VP39"/>
    <property type="match status" value="1"/>
</dbReference>
<dbReference type="HAMAP" id="MF_01057">
    <property type="entry name" value="tRNA_methyltr_TrmB"/>
    <property type="match status" value="1"/>
</dbReference>
<dbReference type="InterPro" id="IPR029063">
    <property type="entry name" value="SAM-dependent_MTases_sf"/>
</dbReference>
<dbReference type="InterPro" id="IPR003358">
    <property type="entry name" value="tRNA_(Gua-N-7)_MeTrfase_Trmb"/>
</dbReference>
<dbReference type="InterPro" id="IPR055361">
    <property type="entry name" value="tRNA_methyltr_TrmB_bact"/>
</dbReference>
<dbReference type="PANTHER" id="PTHR23417">
    <property type="entry name" value="3-DEOXY-D-MANNO-OCTULOSONIC-ACID TRANSFERASE/TRNA GUANINE-N 7 - -METHYLTRANSFERASE"/>
    <property type="match status" value="1"/>
</dbReference>
<dbReference type="PANTHER" id="PTHR23417:SF14">
    <property type="entry name" value="PENTACOTRIPEPTIDE-REPEAT REGION OF PRORP DOMAIN-CONTAINING PROTEIN"/>
    <property type="match status" value="1"/>
</dbReference>
<dbReference type="Pfam" id="PF02390">
    <property type="entry name" value="Methyltransf_4"/>
    <property type="match status" value="1"/>
</dbReference>
<dbReference type="SUPFAM" id="SSF53335">
    <property type="entry name" value="S-adenosyl-L-methionine-dependent methyltransferases"/>
    <property type="match status" value="1"/>
</dbReference>
<dbReference type="PROSITE" id="PS51625">
    <property type="entry name" value="SAM_MT_TRMB"/>
    <property type="match status" value="1"/>
</dbReference>
<gene>
    <name evidence="1" type="primary">trmB</name>
    <name type="ordered locus">COPRO5265_0563</name>
</gene>
<evidence type="ECO:0000255" key="1">
    <source>
        <dbReference type="HAMAP-Rule" id="MF_01057"/>
    </source>
</evidence>
<protein>
    <recommendedName>
        <fullName evidence="1">tRNA (guanine-N(7)-)-methyltransferase</fullName>
        <ecNumber evidence="1">2.1.1.33</ecNumber>
    </recommendedName>
    <alternativeName>
        <fullName evidence="1">tRNA (guanine(46)-N(7))-methyltransferase</fullName>
    </alternativeName>
    <alternativeName>
        <fullName evidence="1">tRNA(m7G46)-methyltransferase</fullName>
    </alternativeName>
</protein>
<sequence>MLIKPQSTSSFPLNWDAIFPEKNPLAVEIGFGNGKFLKTLETTGTNVVGFEVSLLSVEKAMKVIDHTKTALLLMDGIWGLRELFSERSVDALYINFPLPWPHKKHASRRLFTLPKLQIYASRLVDNAILQLQTDVKEYAEEAIRNSEESGLFSLADYAVRNEVQVGTKYEQKWVSQGKKIYKVVLRKKRHVSVPNYLDKEVIMPHAIVHDSHGTLKAGTYRTTFGTIKLWEPFSNNQAMLLIPAIVSDDDFIGVSLQQRVYISVSPHREGFIVKLDNHADVFKTENVKSLIWLIANQISNGNIKRINVQPPSKLEYEPA</sequence>
<accession>B5Y822</accession>
<reference key="1">
    <citation type="submission" date="2008-08" db="EMBL/GenBank/DDBJ databases">
        <title>The complete genome sequence of Coprothermobacter proteolyticus strain ATCC 5245 / DSM 5265 / BT.</title>
        <authorList>
            <person name="Dodson R.J."/>
            <person name="Durkin A.S."/>
            <person name="Wu M."/>
            <person name="Eisen J."/>
            <person name="Sutton G."/>
        </authorList>
    </citation>
    <scope>NUCLEOTIDE SEQUENCE [LARGE SCALE GENOMIC DNA]</scope>
    <source>
        <strain>ATCC 35245 / DSM 5265 / OCM 4 / BT</strain>
    </source>
</reference>